<feature type="initiator methionine" description="Removed" evidence="2">
    <location>
        <position position="1"/>
    </location>
</feature>
<feature type="chain" id="PRO_0000140854" description="Phospho-2-dehydro-3-deoxyheptonate aldolase">
    <location>
        <begin position="2"/>
        <end position="450"/>
    </location>
</feature>
<feature type="region of interest" description="Disordered" evidence="1">
    <location>
        <begin position="1"/>
        <end position="20"/>
    </location>
</feature>
<feature type="compositionally biased region" description="Polar residues" evidence="1">
    <location>
        <begin position="1"/>
        <end position="13"/>
    </location>
</feature>
<feature type="sequence conflict" description="In Ref. 2; AA sequence." evidence="3" ref="2">
    <original>WRDLPAAQ</original>
    <variation>DDPLQAPS</variation>
    <location>
        <begin position="15"/>
        <end position="22"/>
    </location>
</feature>
<organism>
    <name type="scientific">Streptomyces coelicolor (strain ATCC BAA-471 / A3(2) / M145)</name>
    <dbReference type="NCBI Taxonomy" id="100226"/>
    <lineage>
        <taxon>Bacteria</taxon>
        <taxon>Bacillati</taxon>
        <taxon>Actinomycetota</taxon>
        <taxon>Actinomycetes</taxon>
        <taxon>Kitasatosporales</taxon>
        <taxon>Streptomycetaceae</taxon>
        <taxon>Streptomyces</taxon>
        <taxon>Streptomyces albidoflavus group</taxon>
    </lineage>
</organism>
<dbReference type="EC" id="2.5.1.54"/>
<dbReference type="EMBL" id="AL939111">
    <property type="protein sequence ID" value="CAB51963.1"/>
    <property type="molecule type" value="Genomic_DNA"/>
</dbReference>
<dbReference type="PIR" id="T35496">
    <property type="entry name" value="T35496"/>
</dbReference>
<dbReference type="RefSeq" id="NP_626372.1">
    <property type="nucleotide sequence ID" value="NC_003888.3"/>
</dbReference>
<dbReference type="RefSeq" id="WP_003976701.1">
    <property type="nucleotide sequence ID" value="NZ_VNID01000001.1"/>
</dbReference>
<dbReference type="SMR" id="P80574"/>
<dbReference type="FunCoup" id="P80574">
    <property type="interactions" value="295"/>
</dbReference>
<dbReference type="STRING" id="100226.gene:17759713"/>
<dbReference type="PaxDb" id="100226-SCO2115"/>
<dbReference type="KEGG" id="sco:SCO2115"/>
<dbReference type="PATRIC" id="fig|100226.15.peg.2149"/>
<dbReference type="eggNOG" id="COG3200">
    <property type="taxonomic scope" value="Bacteria"/>
</dbReference>
<dbReference type="HOGENOM" id="CLU_026885_0_1_11"/>
<dbReference type="InParanoid" id="P80574"/>
<dbReference type="OrthoDB" id="9766852at2"/>
<dbReference type="PhylomeDB" id="P80574"/>
<dbReference type="UniPathway" id="UPA00053">
    <property type="reaction ID" value="UER00084"/>
</dbReference>
<dbReference type="Proteomes" id="UP000001973">
    <property type="component" value="Chromosome"/>
</dbReference>
<dbReference type="GO" id="GO:0003849">
    <property type="term" value="F:3-deoxy-7-phosphoheptulonate synthase activity"/>
    <property type="evidence" value="ECO:0007669"/>
    <property type="project" value="UniProtKB-EC"/>
</dbReference>
<dbReference type="GO" id="GO:0008652">
    <property type="term" value="P:amino acid biosynthetic process"/>
    <property type="evidence" value="ECO:0007669"/>
    <property type="project" value="UniProtKB-KW"/>
</dbReference>
<dbReference type="GO" id="GO:0009073">
    <property type="term" value="P:aromatic amino acid family biosynthetic process"/>
    <property type="evidence" value="ECO:0007669"/>
    <property type="project" value="UniProtKB-KW"/>
</dbReference>
<dbReference type="GO" id="GO:0009423">
    <property type="term" value="P:chorismate biosynthetic process"/>
    <property type="evidence" value="ECO:0007669"/>
    <property type="project" value="UniProtKB-UniPathway"/>
</dbReference>
<dbReference type="Gene3D" id="3.20.20.70">
    <property type="entry name" value="Aldolase class I"/>
    <property type="match status" value="1"/>
</dbReference>
<dbReference type="InterPro" id="IPR013785">
    <property type="entry name" value="Aldolase_TIM"/>
</dbReference>
<dbReference type="InterPro" id="IPR002480">
    <property type="entry name" value="DAHP_synth_2"/>
</dbReference>
<dbReference type="NCBIfam" id="TIGR01358">
    <property type="entry name" value="DAHP_synth_II"/>
    <property type="match status" value="1"/>
</dbReference>
<dbReference type="PANTHER" id="PTHR21337:SF0">
    <property type="entry name" value="PHOSPHO-2-DEHYDRO-3-DEOXYHEPTONATE ALDOLASE"/>
    <property type="match status" value="1"/>
</dbReference>
<dbReference type="PANTHER" id="PTHR21337">
    <property type="entry name" value="PHOSPHO-2-DEHYDRO-3-DEOXYHEPTONATE ALDOLASE 1, 2"/>
    <property type="match status" value="1"/>
</dbReference>
<dbReference type="Pfam" id="PF01474">
    <property type="entry name" value="DAHP_synth_2"/>
    <property type="match status" value="1"/>
</dbReference>
<dbReference type="SUPFAM" id="SSF51569">
    <property type="entry name" value="Aldolase"/>
    <property type="match status" value="1"/>
</dbReference>
<proteinExistence type="evidence at protein level"/>
<comment type="catalytic activity">
    <reaction>
        <text>D-erythrose 4-phosphate + phosphoenolpyruvate + H2O = 7-phospho-2-dehydro-3-deoxy-D-arabino-heptonate + phosphate</text>
        <dbReference type="Rhea" id="RHEA:14717"/>
        <dbReference type="ChEBI" id="CHEBI:15377"/>
        <dbReference type="ChEBI" id="CHEBI:16897"/>
        <dbReference type="ChEBI" id="CHEBI:43474"/>
        <dbReference type="ChEBI" id="CHEBI:58394"/>
        <dbReference type="ChEBI" id="CHEBI:58702"/>
        <dbReference type="EC" id="2.5.1.54"/>
    </reaction>
</comment>
<comment type="pathway">
    <text>Metabolic intermediate biosynthesis; chorismate biosynthesis; chorismate from D-erythrose 4-phosphate and phosphoenolpyruvate: step 1/7.</text>
</comment>
<comment type="subunit">
    <text>Homodimer.</text>
</comment>
<comment type="similarity">
    <text evidence="3">Belongs to the class-II DAHP synthase family.</text>
</comment>
<keyword id="KW-0028">Amino-acid biosynthesis</keyword>
<keyword id="KW-0057">Aromatic amino acid biosynthesis</keyword>
<keyword id="KW-0903">Direct protein sequencing</keyword>
<keyword id="KW-1185">Reference proteome</keyword>
<keyword id="KW-0808">Transferase</keyword>
<reference key="1">
    <citation type="journal article" date="2002" name="Nature">
        <title>Complete genome sequence of the model actinomycete Streptomyces coelicolor A3(2).</title>
        <authorList>
            <person name="Bentley S.D."/>
            <person name="Chater K.F."/>
            <person name="Cerdeno-Tarraga A.-M."/>
            <person name="Challis G.L."/>
            <person name="Thomson N.R."/>
            <person name="James K.D."/>
            <person name="Harris D.E."/>
            <person name="Quail M.A."/>
            <person name="Kieser H."/>
            <person name="Harper D."/>
            <person name="Bateman A."/>
            <person name="Brown S."/>
            <person name="Chandra G."/>
            <person name="Chen C.W."/>
            <person name="Collins M."/>
            <person name="Cronin A."/>
            <person name="Fraser A."/>
            <person name="Goble A."/>
            <person name="Hidalgo J."/>
            <person name="Hornsby T."/>
            <person name="Howarth S."/>
            <person name="Huang C.-H."/>
            <person name="Kieser T."/>
            <person name="Larke L."/>
            <person name="Murphy L.D."/>
            <person name="Oliver K."/>
            <person name="O'Neil S."/>
            <person name="Rabbinowitsch E."/>
            <person name="Rajandream M.A."/>
            <person name="Rutherford K.M."/>
            <person name="Rutter S."/>
            <person name="Seeger K."/>
            <person name="Saunders D."/>
            <person name="Sharp S."/>
            <person name="Squares R."/>
            <person name="Squares S."/>
            <person name="Taylor K."/>
            <person name="Warren T."/>
            <person name="Wietzorrek A."/>
            <person name="Woodward J.R."/>
            <person name="Barrell B.G."/>
            <person name="Parkhill J."/>
            <person name="Hopwood D.A."/>
        </authorList>
    </citation>
    <scope>NUCLEOTIDE SEQUENCE [LARGE SCALE GENOMIC DNA]</scope>
    <source>
        <strain>ATCC BAA-471 / A3(2) / M145</strain>
    </source>
</reference>
<reference key="2">
    <citation type="journal article" date="1996" name="Microbiology">
        <title>Evidence for a novel class of microbial 3-deoxy-D-arabino-heptulosonate-7-phosphate synthase in Streptomyces coelicolor A3(2), Streptomyces rimosus and Neurospora crassa.</title>
        <authorList>
            <person name="Walker G.E."/>
            <person name="Dunbar B."/>
            <person name="Hunter I.S."/>
            <person name="Nimmo H.G."/>
            <person name="Coggins J.R."/>
        </authorList>
    </citation>
    <scope>PROTEIN SEQUENCE OF 2-22</scope>
    <scope>CHARACTERIZATION</scope>
    <source>
        <strain>A3(2) / NRRL B-16638</strain>
    </source>
</reference>
<protein>
    <recommendedName>
        <fullName>Phospho-2-dehydro-3-deoxyheptonate aldolase</fullName>
        <ecNumber>2.5.1.54</ecNumber>
    </recommendedName>
    <alternativeName>
        <fullName>3-deoxy-D-arabino-heptulosonate 7-phosphate synthase</fullName>
    </alternativeName>
    <alternativeName>
        <fullName>DAHP synthase</fullName>
    </alternativeName>
    <alternativeName>
        <fullName>Phospho-2-keto-3-deoxyheptonate aldolase</fullName>
    </alternativeName>
</protein>
<accession>P80574</accession>
<accession>Q9S2M8</accession>
<sequence length="450" mass="49870">MTVNAKTSPSAGNTWRDLPAAQQPEYPDTEALRAVIADLESYPPLVFAGECDQLRARMAAVAKGEAFLLQGGDCAEAFDAVSADHIRNKLKTLLQMGAVLTYAASVPVVKVGRIAGQYSKPRSKPTETRDGVTLPTYRGDSVNGFDFTEAARIPDPERLKRMYHASASTLNLVRAFTTGGYADLRQVHAWNQDFVKSSPSGQRYEQLAREIDNALNFMRACGTDPAEFQTVEFFSSHEALLLDYESALTRVDSRTGQLYDVSGHMVWIGERTRQLDHAHIEFASRIRNPIGIKLGPSTTAEEALQYIERLDPEREPGRLTFIVRMGADKIRDKLPELVEKVTASGATVAWITDPMHGNTYEAASGHKTRRFDDVLDEVKGFFEVHKSLGTHPGGIHVELTGDDVTECVGGGDEIFVDDLHQRYETACDPRLNRSQSLDLAFLVAEMYRDQ</sequence>
<name>AROF_STRCO</name>
<evidence type="ECO:0000256" key="1">
    <source>
        <dbReference type="SAM" id="MobiDB-lite"/>
    </source>
</evidence>
<evidence type="ECO:0000269" key="2">
    <source>
    </source>
</evidence>
<evidence type="ECO:0000305" key="3"/>
<gene>
    <name type="primary">aroH</name>
    <name type="ordered locus">SCO2115</name>
    <name type="ORF">SC6E10.09c</name>
</gene>